<reference key="1">
    <citation type="journal article" date="2004" name="Genome Res.">
        <title>Genome sequence of Haloarcula marismortui: a halophilic archaeon from the Dead Sea.</title>
        <authorList>
            <person name="Baliga N.S."/>
            <person name="Bonneau R."/>
            <person name="Facciotti M.T."/>
            <person name="Pan M."/>
            <person name="Glusman G."/>
            <person name="Deutsch E.W."/>
            <person name="Shannon P."/>
            <person name="Chiu Y."/>
            <person name="Weng R.S."/>
            <person name="Gan R.R."/>
            <person name="Hung P."/>
            <person name="Date S.V."/>
            <person name="Marcotte E."/>
            <person name="Hood L."/>
            <person name="Ng W.V."/>
        </authorList>
    </citation>
    <scope>NUCLEOTIDE SEQUENCE [LARGE SCALE GENOMIC DNA]</scope>
    <source>
        <strain>ATCC 43049 / DSM 3752 / JCM 8966 / VKM B-1809</strain>
    </source>
</reference>
<dbReference type="EMBL" id="AY596297">
    <property type="protein sequence ID" value="AAV46204.1"/>
    <property type="molecule type" value="Genomic_DNA"/>
</dbReference>
<dbReference type="RefSeq" id="WP_004956661.1">
    <property type="nucleotide sequence ID" value="NZ_CP039138.1"/>
</dbReference>
<dbReference type="SMR" id="Q5V2P8"/>
<dbReference type="STRING" id="272569.rrnAC1262"/>
<dbReference type="PaxDb" id="272569-rrnAC1262"/>
<dbReference type="EnsemblBacteria" id="AAV46204">
    <property type="protein sequence ID" value="AAV46204"/>
    <property type="gene ID" value="rrnAC1262"/>
</dbReference>
<dbReference type="KEGG" id="hma:rrnAC1262"/>
<dbReference type="PATRIC" id="fig|272569.17.peg.1971"/>
<dbReference type="eggNOG" id="arCOG00467">
    <property type="taxonomic scope" value="Archaea"/>
</dbReference>
<dbReference type="HOGENOM" id="CLU_025112_3_1_2"/>
<dbReference type="Proteomes" id="UP000001169">
    <property type="component" value="Chromosome I"/>
</dbReference>
<dbReference type="GO" id="GO:0005524">
    <property type="term" value="F:ATP binding"/>
    <property type="evidence" value="ECO:0007669"/>
    <property type="project" value="UniProtKB-UniRule"/>
</dbReference>
<dbReference type="GO" id="GO:0016887">
    <property type="term" value="F:ATP hydrolysis activity"/>
    <property type="evidence" value="ECO:0007669"/>
    <property type="project" value="InterPro"/>
</dbReference>
<dbReference type="GO" id="GO:0006260">
    <property type="term" value="P:DNA replication"/>
    <property type="evidence" value="ECO:0007669"/>
    <property type="project" value="UniProtKB-UniRule"/>
</dbReference>
<dbReference type="CDD" id="cd08768">
    <property type="entry name" value="Cdc6_C"/>
    <property type="match status" value="1"/>
</dbReference>
<dbReference type="Gene3D" id="1.10.8.60">
    <property type="match status" value="1"/>
</dbReference>
<dbReference type="Gene3D" id="3.40.50.300">
    <property type="entry name" value="P-loop containing nucleotide triphosphate hydrolases"/>
    <property type="match status" value="1"/>
</dbReference>
<dbReference type="Gene3D" id="1.10.10.10">
    <property type="entry name" value="Winged helix-like DNA-binding domain superfamily/Winged helix DNA-binding domain"/>
    <property type="match status" value="1"/>
</dbReference>
<dbReference type="HAMAP" id="MF_01407">
    <property type="entry name" value="ORC1_type_DNA_replic_protein"/>
    <property type="match status" value="1"/>
</dbReference>
<dbReference type="InterPro" id="IPR049945">
    <property type="entry name" value="AAA_22"/>
</dbReference>
<dbReference type="InterPro" id="IPR015163">
    <property type="entry name" value="Cdc6_C"/>
</dbReference>
<dbReference type="InterPro" id="IPR055237">
    <property type="entry name" value="Cdc6_lid"/>
</dbReference>
<dbReference type="InterPro" id="IPR050311">
    <property type="entry name" value="ORC1/CDC6"/>
</dbReference>
<dbReference type="InterPro" id="IPR014277">
    <property type="entry name" value="Orc1/Cdc6_arc"/>
</dbReference>
<dbReference type="InterPro" id="IPR027417">
    <property type="entry name" value="P-loop_NTPase"/>
</dbReference>
<dbReference type="InterPro" id="IPR036388">
    <property type="entry name" value="WH-like_DNA-bd_sf"/>
</dbReference>
<dbReference type="InterPro" id="IPR036390">
    <property type="entry name" value="WH_DNA-bd_sf"/>
</dbReference>
<dbReference type="NCBIfam" id="TIGR02928">
    <property type="entry name" value="orc1/cdc6 family replication initiation protein"/>
    <property type="match status" value="1"/>
</dbReference>
<dbReference type="PANTHER" id="PTHR10763">
    <property type="entry name" value="CELL DIVISION CONTROL PROTEIN 6-RELATED"/>
    <property type="match status" value="1"/>
</dbReference>
<dbReference type="PANTHER" id="PTHR10763:SF22">
    <property type="entry name" value="ORC1-TYPE DNA REPLICATION PROTEIN"/>
    <property type="match status" value="1"/>
</dbReference>
<dbReference type="Pfam" id="PF13401">
    <property type="entry name" value="AAA_22"/>
    <property type="match status" value="1"/>
</dbReference>
<dbReference type="Pfam" id="PF09079">
    <property type="entry name" value="Cdc6_C"/>
    <property type="match status" value="1"/>
</dbReference>
<dbReference type="Pfam" id="PF22703">
    <property type="entry name" value="Cdc6_lid"/>
    <property type="match status" value="1"/>
</dbReference>
<dbReference type="SMART" id="SM01074">
    <property type="entry name" value="Cdc6_C"/>
    <property type="match status" value="1"/>
</dbReference>
<dbReference type="SUPFAM" id="SSF52540">
    <property type="entry name" value="P-loop containing nucleoside triphosphate hydrolases"/>
    <property type="match status" value="1"/>
</dbReference>
<dbReference type="SUPFAM" id="SSF46785">
    <property type="entry name" value="Winged helix' DNA-binding domain"/>
    <property type="match status" value="1"/>
</dbReference>
<gene>
    <name type="primary">cdc6h</name>
    <name type="ordered locus">rrnAC1262</name>
</gene>
<protein>
    <recommendedName>
        <fullName evidence="1">ORC1-type DNA replication protein 8</fullName>
    </recommendedName>
</protein>
<name>CDC6H_HALMA</name>
<feature type="chain" id="PRO_0000150985" description="ORC1-type DNA replication protein 8">
    <location>
        <begin position="1"/>
        <end position="442"/>
    </location>
</feature>
<feature type="binding site" evidence="1">
    <location>
        <begin position="66"/>
        <end position="70"/>
    </location>
    <ligand>
        <name>ATP</name>
        <dbReference type="ChEBI" id="CHEBI:30616"/>
    </ligand>
</feature>
<feature type="binding site" evidence="1">
    <location>
        <position position="218"/>
    </location>
    <ligand>
        <name>ATP</name>
        <dbReference type="ChEBI" id="CHEBI:30616"/>
    </ligand>
</feature>
<sequence>MVDVNENPFDGTDSIFERKQPLKKDTFTPDTIFHRDEEIEFYINALQDVIVGHDPNNVFVYGPTGVGKTAVTKWVRDKLEEKAEAEDIPLTVVGPINCRNYRSAYALVNTLVNEFRDPENQLPESGYSTDSVFEFLYEEIEAVGGNVLIILDEIDNIPADARNDFLYELPRAEANENTPITDAKVGLIGISNDLKFVDVLEPKVKSTLGEREIKFGPYDATELRDILGYYADIAFREDVLGEDVVPLAAAFSAQERGDVRQGLRILEKAGEYARMEGAEGVTEAHTRRATDTIETDELLDYFEHDLSSQQALTYLATTLALIEPKHEASTKRIYNLYSSIAESSGRRVKSERKIYEFLDQLSMQGLVRSAERNLGRKGGRKYIYEVTDDPTDIINAALQSSYSDAVPSNVNGILEHYLEDEATEFEAPDTTDDEQQNLWQFT</sequence>
<accession>Q5V2P8</accession>
<comment type="function">
    <text evidence="1">Involved in regulation of DNA replication.</text>
</comment>
<comment type="similarity">
    <text evidence="1">Belongs to the CDC6/cdc18 family.</text>
</comment>
<proteinExistence type="inferred from homology"/>
<organism>
    <name type="scientific">Haloarcula marismortui (strain ATCC 43049 / DSM 3752 / JCM 8966 / VKM B-1809)</name>
    <name type="common">Halobacterium marismortui</name>
    <dbReference type="NCBI Taxonomy" id="272569"/>
    <lineage>
        <taxon>Archaea</taxon>
        <taxon>Methanobacteriati</taxon>
        <taxon>Methanobacteriota</taxon>
        <taxon>Stenosarchaea group</taxon>
        <taxon>Halobacteria</taxon>
        <taxon>Halobacteriales</taxon>
        <taxon>Haloarculaceae</taxon>
        <taxon>Haloarcula</taxon>
    </lineage>
</organism>
<keyword id="KW-0067">ATP-binding</keyword>
<keyword id="KW-0235">DNA replication</keyword>
<keyword id="KW-0547">Nucleotide-binding</keyword>
<keyword id="KW-1185">Reference proteome</keyword>
<evidence type="ECO:0000255" key="1">
    <source>
        <dbReference type="HAMAP-Rule" id="MF_01407"/>
    </source>
</evidence>